<comment type="similarity">
    <text evidence="1">Belongs to the universal ribosomal protein uS9 family.</text>
</comment>
<name>RS9_GLAP5</name>
<protein>
    <recommendedName>
        <fullName evidence="1">Small ribosomal subunit protein uS9</fullName>
    </recommendedName>
    <alternativeName>
        <fullName evidence="2">30S ribosomal protein S9</fullName>
    </alternativeName>
</protein>
<feature type="chain" id="PRO_1000146457" description="Small ribosomal subunit protein uS9">
    <location>
        <begin position="1"/>
        <end position="131"/>
    </location>
</feature>
<organism>
    <name type="scientific">Glaesserella parasuis serovar 5 (strain SH0165)</name>
    <name type="common">Haemophilus parasuis</name>
    <dbReference type="NCBI Taxonomy" id="557723"/>
    <lineage>
        <taxon>Bacteria</taxon>
        <taxon>Pseudomonadati</taxon>
        <taxon>Pseudomonadota</taxon>
        <taxon>Gammaproteobacteria</taxon>
        <taxon>Pasteurellales</taxon>
        <taxon>Pasteurellaceae</taxon>
        <taxon>Glaesserella</taxon>
    </lineage>
</organism>
<proteinExistence type="inferred from homology"/>
<accession>B8F3F7</accession>
<gene>
    <name evidence="1" type="primary">rpsI</name>
    <name type="ordered locus">HAPS_0163</name>
</gene>
<reference key="1">
    <citation type="journal article" date="2009" name="J. Bacteriol.">
        <title>Complete genome sequence of Haemophilus parasuis SH0165.</title>
        <authorList>
            <person name="Yue M."/>
            <person name="Yang F."/>
            <person name="Yang J."/>
            <person name="Bei W."/>
            <person name="Cai X."/>
            <person name="Chen L."/>
            <person name="Dong J."/>
            <person name="Zhou R."/>
            <person name="Jin M."/>
            <person name="Jin Q."/>
            <person name="Chen H."/>
        </authorList>
    </citation>
    <scope>NUCLEOTIDE SEQUENCE [LARGE SCALE GENOMIC DNA]</scope>
    <source>
        <strain>SH0165</strain>
    </source>
</reference>
<keyword id="KW-1185">Reference proteome</keyword>
<keyword id="KW-0687">Ribonucleoprotein</keyword>
<keyword id="KW-0689">Ribosomal protein</keyword>
<sequence>MTAANQNYGTGRRKSSSARVFIKPGNGNITINQRSLEVYFGRETARMIVRQPLELVELTDKLDLYITVKGGGISGQAGAIRHGITRALIEYDETLRPALRAAGFVTRDARRVERKKVGLHKARRRPQYSKR</sequence>
<evidence type="ECO:0000255" key="1">
    <source>
        <dbReference type="HAMAP-Rule" id="MF_00532"/>
    </source>
</evidence>
<evidence type="ECO:0000305" key="2"/>
<dbReference type="EMBL" id="CP001321">
    <property type="protein sequence ID" value="ACL31859.1"/>
    <property type="molecule type" value="Genomic_DNA"/>
</dbReference>
<dbReference type="RefSeq" id="WP_005711273.1">
    <property type="nucleotide sequence ID" value="NC_011852.1"/>
</dbReference>
<dbReference type="SMR" id="B8F3F7"/>
<dbReference type="STRING" id="557723.HAPS_0163"/>
<dbReference type="GeneID" id="66618555"/>
<dbReference type="KEGG" id="hap:HAPS_0163"/>
<dbReference type="HOGENOM" id="CLU_046483_2_1_6"/>
<dbReference type="Proteomes" id="UP000006743">
    <property type="component" value="Chromosome"/>
</dbReference>
<dbReference type="GO" id="GO:0022627">
    <property type="term" value="C:cytosolic small ribosomal subunit"/>
    <property type="evidence" value="ECO:0007669"/>
    <property type="project" value="TreeGrafter"/>
</dbReference>
<dbReference type="GO" id="GO:0003723">
    <property type="term" value="F:RNA binding"/>
    <property type="evidence" value="ECO:0007669"/>
    <property type="project" value="TreeGrafter"/>
</dbReference>
<dbReference type="GO" id="GO:0003735">
    <property type="term" value="F:structural constituent of ribosome"/>
    <property type="evidence" value="ECO:0007669"/>
    <property type="project" value="InterPro"/>
</dbReference>
<dbReference type="GO" id="GO:0006412">
    <property type="term" value="P:translation"/>
    <property type="evidence" value="ECO:0007669"/>
    <property type="project" value="UniProtKB-UniRule"/>
</dbReference>
<dbReference type="FunFam" id="3.30.230.10:FF:000001">
    <property type="entry name" value="30S ribosomal protein S9"/>
    <property type="match status" value="1"/>
</dbReference>
<dbReference type="Gene3D" id="3.30.230.10">
    <property type="match status" value="1"/>
</dbReference>
<dbReference type="HAMAP" id="MF_00532_B">
    <property type="entry name" value="Ribosomal_uS9_B"/>
    <property type="match status" value="1"/>
</dbReference>
<dbReference type="InterPro" id="IPR020568">
    <property type="entry name" value="Ribosomal_Su5_D2-typ_SF"/>
</dbReference>
<dbReference type="InterPro" id="IPR000754">
    <property type="entry name" value="Ribosomal_uS9"/>
</dbReference>
<dbReference type="InterPro" id="IPR023035">
    <property type="entry name" value="Ribosomal_uS9_bac/plastid"/>
</dbReference>
<dbReference type="InterPro" id="IPR020574">
    <property type="entry name" value="Ribosomal_uS9_CS"/>
</dbReference>
<dbReference type="InterPro" id="IPR014721">
    <property type="entry name" value="Ribsml_uS5_D2-typ_fold_subgr"/>
</dbReference>
<dbReference type="NCBIfam" id="NF001099">
    <property type="entry name" value="PRK00132.1"/>
    <property type="match status" value="1"/>
</dbReference>
<dbReference type="PANTHER" id="PTHR21569">
    <property type="entry name" value="RIBOSOMAL PROTEIN S9"/>
    <property type="match status" value="1"/>
</dbReference>
<dbReference type="PANTHER" id="PTHR21569:SF1">
    <property type="entry name" value="SMALL RIBOSOMAL SUBUNIT PROTEIN US9M"/>
    <property type="match status" value="1"/>
</dbReference>
<dbReference type="Pfam" id="PF00380">
    <property type="entry name" value="Ribosomal_S9"/>
    <property type="match status" value="1"/>
</dbReference>
<dbReference type="SUPFAM" id="SSF54211">
    <property type="entry name" value="Ribosomal protein S5 domain 2-like"/>
    <property type="match status" value="1"/>
</dbReference>
<dbReference type="PROSITE" id="PS00360">
    <property type="entry name" value="RIBOSOMAL_S9"/>
    <property type="match status" value="1"/>
</dbReference>